<keyword id="KW-0002">3D-structure</keyword>
<keyword id="KW-1015">Disulfide bond</keyword>
<keyword id="KW-0325">Glycoprotein</keyword>
<keyword id="KW-0333">Golgi apparatus</keyword>
<keyword id="KW-0472">Membrane</keyword>
<keyword id="KW-1267">Proteomics identification</keyword>
<keyword id="KW-1185">Reference proteome</keyword>
<keyword id="KW-0735">Signal-anchor</keyword>
<keyword id="KW-0808">Transferase</keyword>
<keyword id="KW-0812">Transmembrane</keyword>
<keyword id="KW-1133">Transmembrane helix</keyword>
<comment type="function">
    <text evidence="3">Sulfotransferase that utilizes 3'-phospho-5'-adenylyl sulfate (PAPS) to catalyze the transfer of a sulfo group to position 3 of glucosamine residues in heparan. Catalyzes the rate limiting step in the biosynthesis of heparan sulfate (HSact). This modification is a crucial step in the biosynthesis of anticoagulant heparan sulfate as it completes the structure of the antithrombin pentasaccharide binding site. Also generates GlcUA-GlcNS or IdoUA-GlcNS and IdoUA2S-GlcNH2. The substrate-specific O-sulfation generates an enzyme-modified heparan sulfate which acts as a binding receptor to Herpes simplex virus-1 (HSV-1) and permits its entry.</text>
</comment>
<comment type="catalytic activity">
    <reaction evidence="5">
        <text>alpha-D-glucosaminyl-[heparan sulfate](n) + 3'-phosphoadenylyl sulfate = 3-sulfo-alpha-D-glucosaminyl-[heparan sulfate](n) + adenosine 3',5'-bisphosphate + H(+)</text>
        <dbReference type="Rhea" id="RHEA:15461"/>
        <dbReference type="Rhea" id="RHEA-COMP:9830"/>
        <dbReference type="Rhea" id="RHEA-COMP:9831"/>
        <dbReference type="ChEBI" id="CHEBI:15378"/>
        <dbReference type="ChEBI" id="CHEBI:58339"/>
        <dbReference type="ChEBI" id="CHEBI:58343"/>
        <dbReference type="ChEBI" id="CHEBI:58388"/>
        <dbReference type="ChEBI" id="CHEBI:70975"/>
        <dbReference type="EC" id="2.8.2.23"/>
    </reaction>
</comment>
<comment type="subcellular location">
    <subcellularLocation>
        <location evidence="6">Golgi apparatus membrane</location>
        <topology evidence="6">Single-pass type II membrane protein</topology>
    </subcellularLocation>
</comment>
<comment type="tissue specificity">
    <text evidence="3 4">Highly expressed in skeletal muscle and fetal brain, and also found in adult brain, spinal cord, cerebellum and colon.</text>
</comment>
<comment type="similarity">
    <text evidence="6">Belongs to the sulfotransferase 1 family.</text>
</comment>
<dbReference type="EC" id="2.8.2.23"/>
<dbReference type="EMBL" id="AF503292">
    <property type="protein sequence ID" value="AAN37737.1"/>
    <property type="molecule type" value="mRNA"/>
</dbReference>
<dbReference type="EMBL" id="AK091074">
    <property type="status" value="NOT_ANNOTATED_CDS"/>
    <property type="molecule type" value="mRNA"/>
</dbReference>
<dbReference type="EMBL" id="AK289907">
    <property type="protein sequence ID" value="BAF82596.1"/>
    <property type="molecule type" value="mRNA"/>
</dbReference>
<dbReference type="EMBL" id="CH471051">
    <property type="protein sequence ID" value="EAW48251.1"/>
    <property type="molecule type" value="Genomic_DNA"/>
</dbReference>
<dbReference type="EMBL" id="BC093911">
    <property type="protein sequence ID" value="AAH93911.1"/>
    <property type="molecule type" value="mRNA"/>
</dbReference>
<dbReference type="EMBL" id="BC093913">
    <property type="protein sequence ID" value="AAH93913.1"/>
    <property type="molecule type" value="mRNA"/>
</dbReference>
<dbReference type="CCDS" id="CCDS34517.1"/>
<dbReference type="RefSeq" id="NP_001373968.1">
    <property type="nucleotide sequence ID" value="NM_001387039.1"/>
</dbReference>
<dbReference type="RefSeq" id="NP_001373969.1">
    <property type="nucleotide sequence ID" value="NM_001387040.1"/>
</dbReference>
<dbReference type="RefSeq" id="NP_001373970.1">
    <property type="nucleotide sequence ID" value="NM_001387041.1"/>
</dbReference>
<dbReference type="RefSeq" id="NP_001373971.1">
    <property type="nucleotide sequence ID" value="NM_001387042.1"/>
</dbReference>
<dbReference type="RefSeq" id="NP_001373972.1">
    <property type="nucleotide sequence ID" value="NM_001387043.1"/>
</dbReference>
<dbReference type="RefSeq" id="NP_001373973.1">
    <property type="nucleotide sequence ID" value="NM_001387044.1"/>
</dbReference>
<dbReference type="RefSeq" id="NP_001373974.1">
    <property type="nucleotide sequence ID" value="NM_001387045.1"/>
</dbReference>
<dbReference type="RefSeq" id="NP_001373975.1">
    <property type="nucleotide sequence ID" value="NM_001387046.1"/>
</dbReference>
<dbReference type="RefSeq" id="NP_001373976.1">
    <property type="nucleotide sequence ID" value="NM_001387047.1"/>
</dbReference>
<dbReference type="RefSeq" id="NP_705840.2">
    <property type="nucleotide sequence ID" value="NM_153612.3"/>
</dbReference>
<dbReference type="RefSeq" id="XP_006715442.1">
    <property type="nucleotide sequence ID" value="XM_006715379.2"/>
</dbReference>
<dbReference type="RefSeq" id="XP_011533890.1">
    <property type="nucleotide sequence ID" value="XM_011535588.3"/>
</dbReference>
<dbReference type="RefSeq" id="XP_016865959.1">
    <property type="nucleotide sequence ID" value="XM_017010470.1"/>
</dbReference>
<dbReference type="RefSeq" id="XP_016865960.1">
    <property type="nucleotide sequence ID" value="XM_017010471.2"/>
</dbReference>
<dbReference type="RefSeq" id="XP_016865961.1">
    <property type="nucleotide sequence ID" value="XM_017010472.1"/>
</dbReference>
<dbReference type="RefSeq" id="XP_016865962.1">
    <property type="nucleotide sequence ID" value="XM_017010473.1"/>
</dbReference>
<dbReference type="RefSeq" id="XP_016865963.1">
    <property type="nucleotide sequence ID" value="XM_017010474.1"/>
</dbReference>
<dbReference type="RefSeq" id="XP_054210617.1">
    <property type="nucleotide sequence ID" value="XM_054354642.1"/>
</dbReference>
<dbReference type="RefSeq" id="XP_054210618.1">
    <property type="nucleotide sequence ID" value="XM_054354643.1"/>
</dbReference>
<dbReference type="PDB" id="3BD9">
    <property type="method" value="X-ray"/>
    <property type="resolution" value="2.30 A"/>
    <property type="chains" value="A=88-346"/>
</dbReference>
<dbReference type="PDB" id="7SCD">
    <property type="method" value="X-ray"/>
    <property type="resolution" value="2.90 A"/>
    <property type="chains" value="A=86-346"/>
</dbReference>
<dbReference type="PDB" id="7SCE">
    <property type="method" value="X-ray"/>
    <property type="resolution" value="2.75 A"/>
    <property type="chains" value="A=86-346"/>
</dbReference>
<dbReference type="PDBsum" id="3BD9"/>
<dbReference type="PDBsum" id="7SCD"/>
<dbReference type="PDBsum" id="7SCE"/>
<dbReference type="SMR" id="Q8IZT8"/>
<dbReference type="BioGRID" id="128801">
    <property type="interactions" value="6"/>
</dbReference>
<dbReference type="FunCoup" id="Q8IZT8">
    <property type="interactions" value="777"/>
</dbReference>
<dbReference type="STRING" id="9606.ENSP00000427888"/>
<dbReference type="GlyCosmos" id="Q8IZT8">
    <property type="glycosylation" value="1 site, No reported glycans"/>
</dbReference>
<dbReference type="GlyGen" id="Q8IZT8">
    <property type="glycosylation" value="1 site"/>
</dbReference>
<dbReference type="iPTMnet" id="Q8IZT8"/>
<dbReference type="PhosphoSitePlus" id="Q8IZT8"/>
<dbReference type="BioMuta" id="HS3ST5"/>
<dbReference type="DMDM" id="61214369"/>
<dbReference type="jPOST" id="Q8IZT8"/>
<dbReference type="MassIVE" id="Q8IZT8"/>
<dbReference type="PaxDb" id="9606-ENSP00000427888"/>
<dbReference type="PeptideAtlas" id="Q8IZT8"/>
<dbReference type="ProteomicsDB" id="71426"/>
<dbReference type="Antibodypedia" id="50950">
    <property type="antibodies" value="35 antibodies from 14 providers"/>
</dbReference>
<dbReference type="DNASU" id="222537"/>
<dbReference type="Ensembl" id="ENST00000312719.10">
    <property type="protein sequence ID" value="ENSP00000427888.1"/>
    <property type="gene ID" value="ENSG00000249853.9"/>
</dbReference>
<dbReference type="GeneID" id="222537"/>
<dbReference type="KEGG" id="hsa:222537"/>
<dbReference type="MANE-Select" id="ENST00000312719.10">
    <property type="protein sequence ID" value="ENSP00000427888.1"/>
    <property type="RefSeq nucleotide sequence ID" value="NM_153612.4"/>
    <property type="RefSeq protein sequence ID" value="NP_705840.2"/>
</dbReference>
<dbReference type="UCSC" id="uc003pwg.4">
    <property type="organism name" value="human"/>
</dbReference>
<dbReference type="AGR" id="HGNC:19419"/>
<dbReference type="CTD" id="222537"/>
<dbReference type="DisGeNET" id="222537"/>
<dbReference type="GeneCards" id="HS3ST5"/>
<dbReference type="HGNC" id="HGNC:19419">
    <property type="gene designation" value="HS3ST5"/>
</dbReference>
<dbReference type="HPA" id="ENSG00000249853">
    <property type="expression patterns" value="Tissue enhanced (brain, skeletal muscle, urinary bladder)"/>
</dbReference>
<dbReference type="MIM" id="609407">
    <property type="type" value="gene"/>
</dbReference>
<dbReference type="neXtProt" id="NX_Q8IZT8"/>
<dbReference type="NIAGADS" id="ENSG00000249853"/>
<dbReference type="OpenTargets" id="ENSG00000249853"/>
<dbReference type="PharmGKB" id="PA164741639"/>
<dbReference type="VEuPathDB" id="HostDB:ENSG00000249853"/>
<dbReference type="eggNOG" id="KOG3704">
    <property type="taxonomic scope" value="Eukaryota"/>
</dbReference>
<dbReference type="GeneTree" id="ENSGT00940000158991"/>
<dbReference type="HOGENOM" id="CLU_017703_0_0_1"/>
<dbReference type="InParanoid" id="Q8IZT8"/>
<dbReference type="OMA" id="ISLYHTY"/>
<dbReference type="OrthoDB" id="411451at2759"/>
<dbReference type="PAN-GO" id="Q8IZT8">
    <property type="GO annotations" value="1 GO annotation based on evolutionary models"/>
</dbReference>
<dbReference type="PhylomeDB" id="Q8IZT8"/>
<dbReference type="TreeFam" id="TF350755"/>
<dbReference type="BRENDA" id="2.8.2.23">
    <property type="organism ID" value="2681"/>
</dbReference>
<dbReference type="PathwayCommons" id="Q8IZT8"/>
<dbReference type="Reactome" id="R-HSA-2022928">
    <property type="pathway name" value="HS-GAG biosynthesis"/>
</dbReference>
<dbReference type="BioGRID-ORCS" id="222537">
    <property type="hits" value="7 hits in 1144 CRISPR screens"/>
</dbReference>
<dbReference type="ChiTaRS" id="HS3ST5">
    <property type="organism name" value="human"/>
</dbReference>
<dbReference type="EvolutionaryTrace" id="Q8IZT8"/>
<dbReference type="GenomeRNAi" id="222537"/>
<dbReference type="Pharos" id="Q8IZT8">
    <property type="development level" value="Tbio"/>
</dbReference>
<dbReference type="PRO" id="PR:Q8IZT8"/>
<dbReference type="Proteomes" id="UP000005640">
    <property type="component" value="Chromosome 6"/>
</dbReference>
<dbReference type="RNAct" id="Q8IZT8">
    <property type="molecule type" value="protein"/>
</dbReference>
<dbReference type="Bgee" id="ENSG00000249853">
    <property type="expression patterns" value="Expressed in male germ line stem cell (sensu Vertebrata) in testis and 96 other cell types or tissues"/>
</dbReference>
<dbReference type="GO" id="GO:0000139">
    <property type="term" value="C:Golgi membrane"/>
    <property type="evidence" value="ECO:0000304"/>
    <property type="project" value="Reactome"/>
</dbReference>
<dbReference type="GO" id="GO:0016020">
    <property type="term" value="C:membrane"/>
    <property type="evidence" value="ECO:0000303"/>
    <property type="project" value="UniProtKB"/>
</dbReference>
<dbReference type="GO" id="GO:0050656">
    <property type="term" value="F:3'-phosphoadenosine 5'-phosphosulfate binding"/>
    <property type="evidence" value="ECO:0000303"/>
    <property type="project" value="UniProtKB"/>
</dbReference>
<dbReference type="GO" id="GO:0008467">
    <property type="term" value="F:[heparan sulfate]-glucosamine 3-sulfotransferase activity"/>
    <property type="evidence" value="ECO:0000314"/>
    <property type="project" value="UniProtKB"/>
</dbReference>
<dbReference type="GO" id="GO:0015012">
    <property type="term" value="P:heparan sulfate proteoglycan biosynthetic process"/>
    <property type="evidence" value="ECO:0000314"/>
    <property type="project" value="UniProtKB"/>
</dbReference>
<dbReference type="GO" id="GO:0050819">
    <property type="term" value="P:negative regulation of coagulation"/>
    <property type="evidence" value="ECO:0000314"/>
    <property type="project" value="UniProtKB"/>
</dbReference>
<dbReference type="GO" id="GO:0006477">
    <property type="term" value="P:protein sulfation"/>
    <property type="evidence" value="ECO:0000314"/>
    <property type="project" value="UniProtKB"/>
</dbReference>
<dbReference type="GO" id="GO:0046596">
    <property type="term" value="P:regulation of viral entry into host cell"/>
    <property type="evidence" value="ECO:0000314"/>
    <property type="project" value="UniProtKB"/>
</dbReference>
<dbReference type="FunFam" id="3.40.50.300:FF:000603">
    <property type="entry name" value="Sulfotransferase"/>
    <property type="match status" value="1"/>
</dbReference>
<dbReference type="Gene3D" id="3.40.50.300">
    <property type="entry name" value="P-loop containing nucleotide triphosphate hydrolases"/>
    <property type="match status" value="1"/>
</dbReference>
<dbReference type="InterPro" id="IPR037359">
    <property type="entry name" value="NST/OST"/>
</dbReference>
<dbReference type="InterPro" id="IPR027417">
    <property type="entry name" value="P-loop_NTPase"/>
</dbReference>
<dbReference type="InterPro" id="IPR000863">
    <property type="entry name" value="Sulfotransferase_dom"/>
</dbReference>
<dbReference type="PANTHER" id="PTHR10605:SF46">
    <property type="entry name" value="HEPARAN SULFATE GLUCOSAMINE 3-O-SULFOTRANSFERASE 5"/>
    <property type="match status" value="1"/>
</dbReference>
<dbReference type="PANTHER" id="PTHR10605">
    <property type="entry name" value="HEPARAN SULFATE SULFOTRANSFERASE"/>
    <property type="match status" value="1"/>
</dbReference>
<dbReference type="Pfam" id="PF00685">
    <property type="entry name" value="Sulfotransfer_1"/>
    <property type="match status" value="1"/>
</dbReference>
<dbReference type="SUPFAM" id="SSF52540">
    <property type="entry name" value="P-loop containing nucleoside triphosphate hydrolases"/>
    <property type="match status" value="1"/>
</dbReference>
<proteinExistence type="evidence at protein level"/>
<evidence type="ECO:0000250" key="1"/>
<evidence type="ECO:0000255" key="2"/>
<evidence type="ECO:0000269" key="3">
    <source>
    </source>
</evidence>
<evidence type="ECO:0000269" key="4">
    <source>
    </source>
</evidence>
<evidence type="ECO:0000269" key="5">
    <source>
    </source>
</evidence>
<evidence type="ECO:0000305" key="6"/>
<evidence type="ECO:0007829" key="7">
    <source>
        <dbReference type="PDB" id="3BD9"/>
    </source>
</evidence>
<evidence type="ECO:0007829" key="8">
    <source>
        <dbReference type="PDB" id="7SCE"/>
    </source>
</evidence>
<gene>
    <name type="primary">HS3ST5</name>
    <name type="synonym">3OST5</name>
    <name type="synonym">HS3OST5</name>
</gene>
<name>HS3S5_HUMAN</name>
<protein>
    <recommendedName>
        <fullName>Heparan sulfate glucosamine 3-O-sulfotransferase 5</fullName>
        <ecNumber>2.8.2.23</ecNumber>
    </recommendedName>
    <alternativeName>
        <fullName>Heparan sulfate D-glucosaminyl 3-O-sulfotransferase 5</fullName>
        <shortName>3-OST-5</shortName>
        <shortName>Heparan sulfate 3-O-sulfotransferase 5</shortName>
        <shortName>h3-OST-5</shortName>
    </alternativeName>
</protein>
<accession>Q8IZT8</accession>
<accession>A8K1J2</accession>
<accession>Q52LI2</accession>
<accession>Q8N285</accession>
<feature type="chain" id="PRO_0000085222" description="Heparan sulfate glucosamine 3-O-sulfotransferase 5">
    <location>
        <begin position="1"/>
        <end position="346"/>
    </location>
</feature>
<feature type="topological domain" description="Cytoplasmic" evidence="2">
    <location>
        <begin position="1"/>
        <end position="12"/>
    </location>
</feature>
<feature type="transmembrane region" description="Helical; Signal-anchor for type II membrane protein" evidence="2">
    <location>
        <begin position="13"/>
        <end position="32"/>
    </location>
</feature>
<feature type="topological domain" description="Lumenal" evidence="2">
    <location>
        <begin position="33"/>
        <end position="346"/>
    </location>
</feature>
<feature type="binding site" evidence="1">
    <location>
        <begin position="100"/>
        <end position="104"/>
    </location>
    <ligand>
        <name>3'-phosphoadenylyl sulfate</name>
        <dbReference type="ChEBI" id="CHEBI:58339"/>
    </ligand>
</feature>
<feature type="binding site" evidence="1">
    <location>
        <begin position="122"/>
        <end position="128"/>
    </location>
    <ligand>
        <name>substrate</name>
    </ligand>
</feature>
<feature type="binding site" evidence="1">
    <location>
        <begin position="155"/>
        <end position="158"/>
    </location>
    <ligand>
        <name>substrate</name>
    </ligand>
</feature>
<feature type="binding site" evidence="1">
    <location>
        <position position="183"/>
    </location>
    <ligand>
        <name>3'-phosphoadenylyl sulfate</name>
        <dbReference type="ChEBI" id="CHEBI:58339"/>
    </ligand>
</feature>
<feature type="binding site" evidence="1">
    <location>
        <position position="191"/>
    </location>
    <ligand>
        <name>3'-phosphoadenylyl sulfate</name>
        <dbReference type="ChEBI" id="CHEBI:58339"/>
    </ligand>
</feature>
<feature type="binding site" evidence="1">
    <location>
        <begin position="226"/>
        <end position="227"/>
    </location>
    <ligand>
        <name>substrate</name>
    </ligand>
</feature>
<feature type="binding site" evidence="1">
    <location>
        <position position="293"/>
    </location>
    <ligand>
        <name>3'-phosphoadenylyl sulfate</name>
        <dbReference type="ChEBI" id="CHEBI:58339"/>
    </ligand>
</feature>
<feature type="binding site" evidence="1">
    <location>
        <begin position="309"/>
        <end position="313"/>
    </location>
    <ligand>
        <name>3'-phosphoadenylyl sulfate</name>
        <dbReference type="ChEBI" id="CHEBI:58339"/>
    </ligand>
</feature>
<feature type="glycosylation site" description="N-linked (GlcNAc...) asparagine" evidence="2">
    <location>
        <position position="287"/>
    </location>
</feature>
<feature type="disulfide bond" evidence="1">
    <location>
        <begin position="294"/>
        <end position="304"/>
    </location>
</feature>
<feature type="sequence variant" id="VAR_052531" description="In dbSNP:rs17793043.">
    <original>I</original>
    <variation>N</variation>
    <location>
        <position position="247"/>
    </location>
</feature>
<feature type="mutagenesis site" description="Reduces enzyme activity by over 99%." evidence="5">
    <original>R</original>
    <variation>A</variation>
    <location>
        <position position="99"/>
    </location>
</feature>
<feature type="mutagenesis site" description="Reduces enzyme activity by 93%,." evidence="5">
    <original>R</original>
    <variation>A</variation>
    <location>
        <position position="104"/>
    </location>
</feature>
<feature type="mutagenesis site" description="Reduces enzyme activity by over 99%." evidence="5">
    <original>K</original>
    <variation>A</variation>
    <location>
        <position position="155"/>
    </location>
</feature>
<feature type="mutagenesis site" description="Reduces enzyme activity by over 99%." evidence="5">
    <original>Q</original>
    <variation>A</variation>
    <location>
        <position position="195"/>
    </location>
</feature>
<feature type="mutagenesis site" description="Loss of enzyme activity." evidence="5">
    <original>K</original>
    <variation>A</variation>
    <location>
        <position position="309"/>
    </location>
</feature>
<feature type="mutagenesis site" description="Reduces enzyme activity by 98%." evidence="5">
    <original>R</original>
    <variation>A</variation>
    <location>
        <position position="311"/>
    </location>
</feature>
<feature type="strand" evidence="7">
    <location>
        <begin position="92"/>
        <end position="97"/>
    </location>
</feature>
<feature type="helix" evidence="7">
    <location>
        <begin position="103"/>
        <end position="110"/>
    </location>
</feature>
<feature type="strand" evidence="7">
    <location>
        <begin position="116"/>
        <end position="118"/>
    </location>
</feature>
<feature type="helix" evidence="7">
    <location>
        <begin position="129"/>
        <end position="133"/>
    </location>
</feature>
<feature type="helix" evidence="7">
    <location>
        <begin position="136"/>
        <end position="140"/>
    </location>
</feature>
<feature type="strand" evidence="7">
    <location>
        <begin position="151"/>
        <end position="155"/>
    </location>
</feature>
<feature type="helix" evidence="7">
    <location>
        <begin position="157"/>
        <end position="160"/>
    </location>
</feature>
<feature type="helix" evidence="7">
    <location>
        <begin position="165"/>
        <end position="172"/>
    </location>
</feature>
<feature type="strand" evidence="7">
    <location>
        <begin position="177"/>
        <end position="182"/>
    </location>
</feature>
<feature type="helix" evidence="7">
    <location>
        <begin position="185"/>
        <end position="202"/>
    </location>
</feature>
<feature type="helix" evidence="7">
    <location>
        <begin position="210"/>
        <end position="214"/>
    </location>
</feature>
<feature type="turn" evidence="7">
    <location>
        <begin position="217"/>
        <end position="219"/>
    </location>
</feature>
<feature type="strand" evidence="8">
    <location>
        <begin position="220"/>
        <end position="222"/>
    </location>
</feature>
<feature type="helix" evidence="7">
    <location>
        <begin position="227"/>
        <end position="231"/>
    </location>
</feature>
<feature type="helix" evidence="7">
    <location>
        <begin position="234"/>
        <end position="242"/>
    </location>
</feature>
<feature type="helix" evidence="7">
    <location>
        <begin position="247"/>
        <end position="249"/>
    </location>
</feature>
<feature type="strand" evidence="7">
    <location>
        <begin position="250"/>
        <end position="254"/>
    </location>
</feature>
<feature type="helix" evidence="7">
    <location>
        <begin position="255"/>
        <end position="260"/>
    </location>
</feature>
<feature type="helix" evidence="7">
    <location>
        <begin position="262"/>
        <end position="272"/>
    </location>
</feature>
<feature type="helix" evidence="7">
    <location>
        <begin position="281"/>
        <end position="283"/>
    </location>
</feature>
<feature type="strand" evidence="7">
    <location>
        <begin position="284"/>
        <end position="287"/>
    </location>
</feature>
<feature type="turn" evidence="7">
    <location>
        <begin position="288"/>
        <end position="291"/>
    </location>
</feature>
<feature type="strand" evidence="7">
    <location>
        <begin position="292"/>
        <end position="296"/>
    </location>
</feature>
<feature type="strand" evidence="7">
    <location>
        <begin position="298"/>
        <end position="300"/>
    </location>
</feature>
<feature type="helix" evidence="7">
    <location>
        <begin position="318"/>
        <end position="339"/>
    </location>
</feature>
<reference key="1">
    <citation type="journal article" date="2002" name="J. Biol. Chem.">
        <title>Heparan sulfate 3-O-sulfotransferase isoform 5 generates both an antithrombin-binding site and an entry receptor for herpes simplex virus, type 1.</title>
        <authorList>
            <person name="Xia G."/>
            <person name="Chen J."/>
            <person name="Tiwari V."/>
            <person name="Ju W."/>
            <person name="Li J.-P."/>
            <person name="Malmstroem A."/>
            <person name="Shukla D."/>
            <person name="Liu J."/>
        </authorList>
    </citation>
    <scope>NUCLEOTIDE SEQUENCE [MRNA]</scope>
    <scope>TISSUE SPECIFICITY</scope>
    <scope>CHARACTERIZATION</scope>
    <scope>FUNCTION IN HSV-1 ENTRY</scope>
    <source>
        <tissue>Placenta</tissue>
    </source>
</reference>
<reference key="2">
    <citation type="journal article" date="2004" name="Nat. Genet.">
        <title>Complete sequencing and characterization of 21,243 full-length human cDNAs.</title>
        <authorList>
            <person name="Ota T."/>
            <person name="Suzuki Y."/>
            <person name="Nishikawa T."/>
            <person name="Otsuki T."/>
            <person name="Sugiyama T."/>
            <person name="Irie R."/>
            <person name="Wakamatsu A."/>
            <person name="Hayashi K."/>
            <person name="Sato H."/>
            <person name="Nagai K."/>
            <person name="Kimura K."/>
            <person name="Makita H."/>
            <person name="Sekine M."/>
            <person name="Obayashi M."/>
            <person name="Nishi T."/>
            <person name="Shibahara T."/>
            <person name="Tanaka T."/>
            <person name="Ishii S."/>
            <person name="Yamamoto J."/>
            <person name="Saito K."/>
            <person name="Kawai Y."/>
            <person name="Isono Y."/>
            <person name="Nakamura Y."/>
            <person name="Nagahari K."/>
            <person name="Murakami K."/>
            <person name="Yasuda T."/>
            <person name="Iwayanagi T."/>
            <person name="Wagatsuma M."/>
            <person name="Shiratori A."/>
            <person name="Sudo H."/>
            <person name="Hosoiri T."/>
            <person name="Kaku Y."/>
            <person name="Kodaira H."/>
            <person name="Kondo H."/>
            <person name="Sugawara M."/>
            <person name="Takahashi M."/>
            <person name="Kanda K."/>
            <person name="Yokoi T."/>
            <person name="Furuya T."/>
            <person name="Kikkawa E."/>
            <person name="Omura Y."/>
            <person name="Abe K."/>
            <person name="Kamihara K."/>
            <person name="Katsuta N."/>
            <person name="Sato K."/>
            <person name="Tanikawa M."/>
            <person name="Yamazaki M."/>
            <person name="Ninomiya K."/>
            <person name="Ishibashi T."/>
            <person name="Yamashita H."/>
            <person name="Murakawa K."/>
            <person name="Fujimori K."/>
            <person name="Tanai H."/>
            <person name="Kimata M."/>
            <person name="Watanabe M."/>
            <person name="Hiraoka S."/>
            <person name="Chiba Y."/>
            <person name="Ishida S."/>
            <person name="Ono Y."/>
            <person name="Takiguchi S."/>
            <person name="Watanabe S."/>
            <person name="Yosida M."/>
            <person name="Hotuta T."/>
            <person name="Kusano J."/>
            <person name="Kanehori K."/>
            <person name="Takahashi-Fujii A."/>
            <person name="Hara H."/>
            <person name="Tanase T.-O."/>
            <person name="Nomura Y."/>
            <person name="Togiya S."/>
            <person name="Komai F."/>
            <person name="Hara R."/>
            <person name="Takeuchi K."/>
            <person name="Arita M."/>
            <person name="Imose N."/>
            <person name="Musashino K."/>
            <person name="Yuuki H."/>
            <person name="Oshima A."/>
            <person name="Sasaki N."/>
            <person name="Aotsuka S."/>
            <person name="Yoshikawa Y."/>
            <person name="Matsunawa H."/>
            <person name="Ichihara T."/>
            <person name="Shiohata N."/>
            <person name="Sano S."/>
            <person name="Moriya S."/>
            <person name="Momiyama H."/>
            <person name="Satoh N."/>
            <person name="Takami S."/>
            <person name="Terashima Y."/>
            <person name="Suzuki O."/>
            <person name="Nakagawa S."/>
            <person name="Senoh A."/>
            <person name="Mizoguchi H."/>
            <person name="Goto Y."/>
            <person name="Shimizu F."/>
            <person name="Wakebe H."/>
            <person name="Hishigaki H."/>
            <person name="Watanabe T."/>
            <person name="Sugiyama A."/>
            <person name="Takemoto M."/>
            <person name="Kawakami B."/>
            <person name="Yamazaki M."/>
            <person name="Watanabe K."/>
            <person name="Kumagai A."/>
            <person name="Itakura S."/>
            <person name="Fukuzumi Y."/>
            <person name="Fujimori Y."/>
            <person name="Komiyama M."/>
            <person name="Tashiro H."/>
            <person name="Tanigami A."/>
            <person name="Fujiwara T."/>
            <person name="Ono T."/>
            <person name="Yamada K."/>
            <person name="Fujii Y."/>
            <person name="Ozaki K."/>
            <person name="Hirao M."/>
            <person name="Ohmori Y."/>
            <person name="Kawabata A."/>
            <person name="Hikiji T."/>
            <person name="Kobatake N."/>
            <person name="Inagaki H."/>
            <person name="Ikema Y."/>
            <person name="Okamoto S."/>
            <person name="Okitani R."/>
            <person name="Kawakami T."/>
            <person name="Noguchi S."/>
            <person name="Itoh T."/>
            <person name="Shigeta K."/>
            <person name="Senba T."/>
            <person name="Matsumura K."/>
            <person name="Nakajima Y."/>
            <person name="Mizuno T."/>
            <person name="Morinaga M."/>
            <person name="Sasaki M."/>
            <person name="Togashi T."/>
            <person name="Oyama M."/>
            <person name="Hata H."/>
            <person name="Watanabe M."/>
            <person name="Komatsu T."/>
            <person name="Mizushima-Sugano J."/>
            <person name="Satoh T."/>
            <person name="Shirai Y."/>
            <person name="Takahashi Y."/>
            <person name="Nakagawa K."/>
            <person name="Okumura K."/>
            <person name="Nagase T."/>
            <person name="Nomura N."/>
            <person name="Kikuchi H."/>
            <person name="Masuho Y."/>
            <person name="Yamashita R."/>
            <person name="Nakai K."/>
            <person name="Yada T."/>
            <person name="Nakamura Y."/>
            <person name="Ohara O."/>
            <person name="Isogai T."/>
            <person name="Sugano S."/>
        </authorList>
    </citation>
    <scope>NUCLEOTIDE SEQUENCE [LARGE SCALE MRNA]</scope>
    <source>
        <tissue>Caudate nucleus</tissue>
        <tissue>Corpus callosum</tissue>
    </source>
</reference>
<reference key="3">
    <citation type="submission" date="2005-09" db="EMBL/GenBank/DDBJ databases">
        <authorList>
            <person name="Mural R.J."/>
            <person name="Istrail S."/>
            <person name="Sutton G.G."/>
            <person name="Florea L."/>
            <person name="Halpern A.L."/>
            <person name="Mobarry C.M."/>
            <person name="Lippert R."/>
            <person name="Walenz B."/>
            <person name="Shatkay H."/>
            <person name="Dew I."/>
            <person name="Miller J.R."/>
            <person name="Flanigan M.J."/>
            <person name="Edwards N.J."/>
            <person name="Bolanos R."/>
            <person name="Fasulo D."/>
            <person name="Halldorsson B.V."/>
            <person name="Hannenhalli S."/>
            <person name="Turner R."/>
            <person name="Yooseph S."/>
            <person name="Lu F."/>
            <person name="Nusskern D.R."/>
            <person name="Shue B.C."/>
            <person name="Zheng X.H."/>
            <person name="Zhong F."/>
            <person name="Delcher A.L."/>
            <person name="Huson D.H."/>
            <person name="Kravitz S.A."/>
            <person name="Mouchard L."/>
            <person name="Reinert K."/>
            <person name="Remington K.A."/>
            <person name="Clark A.G."/>
            <person name="Waterman M.S."/>
            <person name="Eichler E.E."/>
            <person name="Adams M.D."/>
            <person name="Hunkapiller M.W."/>
            <person name="Myers E.W."/>
            <person name="Venter J.C."/>
        </authorList>
    </citation>
    <scope>NUCLEOTIDE SEQUENCE [LARGE SCALE GENOMIC DNA]</scope>
</reference>
<reference key="4">
    <citation type="journal article" date="2004" name="Genome Res.">
        <title>The status, quality, and expansion of the NIH full-length cDNA project: the Mammalian Gene Collection (MGC).</title>
        <authorList>
            <consortium name="The MGC Project Team"/>
        </authorList>
    </citation>
    <scope>NUCLEOTIDE SEQUENCE [LARGE SCALE MRNA]</scope>
    <source>
        <tissue>Brain</tissue>
    </source>
</reference>
<reference key="5">
    <citation type="journal article" date="2003" name="J. Biol. Chem.">
        <title>Characterization of a heparan sulfate 3-O-sulfotransferase-5, an enzyme synthesizing a tetrasulfated disaccharide.</title>
        <authorList>
            <person name="Mochizuki H."/>
            <person name="Yoshida K."/>
            <person name="Gotoh M."/>
            <person name="Sugioka S."/>
            <person name="Kikuchi N."/>
            <person name="Kwon Y.-D."/>
            <person name="Tawada A."/>
            <person name="Maeyama K."/>
            <person name="Inaba N."/>
            <person name="Hiruma T."/>
            <person name="Kimata K."/>
            <person name="Narimatsu H."/>
        </authorList>
    </citation>
    <scope>CHARACTERIZATION</scope>
    <scope>TISSUE SPECIFICITY</scope>
</reference>
<reference key="6">
    <citation type="journal article" date="2004" name="Biochim. Biophys. Acta">
        <title>The biosynthesis of anticoagulant heparan sulfate by the heparan sulfate 3-O-sulfotransferase isoform 5.</title>
        <authorList>
            <person name="Duncan M.B."/>
            <person name="Chen J."/>
            <person name="Krise J.P."/>
            <person name="Liu J."/>
        </authorList>
    </citation>
    <scope>CHARACTERIZATION</scope>
</reference>
<reference key="7">
    <citation type="journal article" date="2011" name="Sci. Signal.">
        <title>System-wide temporal characterization of the proteome and phosphoproteome of human embryonic stem cell differentiation.</title>
        <authorList>
            <person name="Rigbolt K.T."/>
            <person name="Prokhorova T.A."/>
            <person name="Akimov V."/>
            <person name="Henningsen J."/>
            <person name="Johansen P.T."/>
            <person name="Kratchmarova I."/>
            <person name="Kassem M."/>
            <person name="Mann M."/>
            <person name="Olsen J.V."/>
            <person name="Blagoev B."/>
        </authorList>
    </citation>
    <scope>IDENTIFICATION BY MASS SPECTROMETRY [LARGE SCALE ANALYSIS]</scope>
</reference>
<reference key="8">
    <citation type="journal article" date="2008" name="Nat. Chem. Biol.">
        <title>Engineering sulfotransferases to modify heparan sulfate.</title>
        <authorList>
            <person name="Xu D."/>
            <person name="Moon A.F."/>
            <person name="Song D."/>
            <person name="Pedersen L.C."/>
            <person name="Liu J."/>
        </authorList>
    </citation>
    <scope>X-RAY CRYSTALLOGRAPHY (2.3 ANGSTROMS) OF 88-346 IN COMPLEX WITH ADENOSINE-3'-5'-DIPHOSPHATE</scope>
    <scope>CATALYTIC ACTIVITY</scope>
    <scope>MUTAGENESIS OF ARG-99; ARG-104; LYS-155; GLN-195; LYS-309 AND ARG-311</scope>
</reference>
<sequence length="346" mass="40408">MLFKQQAWLRQKLLVLGSLAVGSLLYLVARVGSLDRLQPICPIEGRLGGARTQAEFPLRALQFKRGLLHEFRKGNASKEQVRLHDLVQQLPKAIIIGVRKGGTRALLEMLNLHPAVVKASQEIHFFDNDENYGKGIEWYRKKMPFSYPQQITIEKSPAYFITEEVPERIYKMNSSIKLLIIVREPTTRAISDYTQVLEGKERKNKTYYKFEKLAIDPNTCEVNTKYKAVRTSIYTKHLERWLKYFPIEQFHVVDGDRLITEPLPELQLVEKFLNLPPRISQYNLYFNATRGFYCLRFNIIFNKCLAGSKGRIHPEVDPSVITKLRKFFHPFNQKFYQITGRTLNWP</sequence>
<organism>
    <name type="scientific">Homo sapiens</name>
    <name type="common">Human</name>
    <dbReference type="NCBI Taxonomy" id="9606"/>
    <lineage>
        <taxon>Eukaryota</taxon>
        <taxon>Metazoa</taxon>
        <taxon>Chordata</taxon>
        <taxon>Craniata</taxon>
        <taxon>Vertebrata</taxon>
        <taxon>Euteleostomi</taxon>
        <taxon>Mammalia</taxon>
        <taxon>Eutheria</taxon>
        <taxon>Euarchontoglires</taxon>
        <taxon>Primates</taxon>
        <taxon>Haplorrhini</taxon>
        <taxon>Catarrhini</taxon>
        <taxon>Hominidae</taxon>
        <taxon>Homo</taxon>
    </lineage>
</organism>